<protein>
    <recommendedName>
        <fullName evidence="1">Putative 3-methyladenine DNA glycosylase</fullName>
        <ecNumber evidence="1">3.2.2.-</ecNumber>
    </recommendedName>
</protein>
<evidence type="ECO:0000255" key="1">
    <source>
        <dbReference type="HAMAP-Rule" id="MF_00527"/>
    </source>
</evidence>
<comment type="similarity">
    <text evidence="1">Belongs to the DNA glycosylase MPG family.</text>
</comment>
<organism>
    <name type="scientific">Rickettsia rickettsii (strain Iowa)</name>
    <dbReference type="NCBI Taxonomy" id="452659"/>
    <lineage>
        <taxon>Bacteria</taxon>
        <taxon>Pseudomonadati</taxon>
        <taxon>Pseudomonadota</taxon>
        <taxon>Alphaproteobacteria</taxon>
        <taxon>Rickettsiales</taxon>
        <taxon>Rickettsiaceae</taxon>
        <taxon>Rickettsieae</taxon>
        <taxon>Rickettsia</taxon>
        <taxon>spotted fever group</taxon>
    </lineage>
</organism>
<reference key="1">
    <citation type="journal article" date="2008" name="Infect. Immun.">
        <title>Genomic comparison of virulent Rickettsia rickettsii Sheila Smith and avirulent Rickettsia rickettsii Iowa.</title>
        <authorList>
            <person name="Ellison D.W."/>
            <person name="Clark T.R."/>
            <person name="Sturdevant D.E."/>
            <person name="Virtaneva K."/>
            <person name="Porcella S.F."/>
            <person name="Hackstadt T."/>
        </authorList>
    </citation>
    <scope>NUCLEOTIDE SEQUENCE [LARGE SCALE GENOMIC DNA]</scope>
    <source>
        <strain>Iowa</strain>
    </source>
</reference>
<sequence>MNKLIPLPREFFARDTNVVSTELIGKTLYFQGKTAIITETESYIGQNDPACHAARGRTKRTDIMFGPAGFSYVYLIYGMYYCLNFVTEAKGFPAATLIRGVHVISPENLYLNGPGKLCKYLGINISHNKCDLINNNEFFVGDIGLKLPYSTTARIGITKGTDKLWRYVVTDITNLISQYNVQP</sequence>
<name>3MGH_RICRO</name>
<accession>B0BX67</accession>
<feature type="chain" id="PRO_1000081703" description="Putative 3-methyladenine DNA glycosylase">
    <location>
        <begin position="1"/>
        <end position="183"/>
    </location>
</feature>
<proteinExistence type="inferred from homology"/>
<keyword id="KW-0227">DNA damage</keyword>
<keyword id="KW-0234">DNA repair</keyword>
<keyword id="KW-0378">Hydrolase</keyword>
<dbReference type="EC" id="3.2.2.-" evidence="1"/>
<dbReference type="EMBL" id="CP000766">
    <property type="protein sequence ID" value="ABY72443.1"/>
    <property type="molecule type" value="Genomic_DNA"/>
</dbReference>
<dbReference type="RefSeq" id="WP_012150679.1">
    <property type="nucleotide sequence ID" value="NC_010263.3"/>
</dbReference>
<dbReference type="SMR" id="B0BX67"/>
<dbReference type="KEGG" id="rrj:RrIowa_0572"/>
<dbReference type="eggNOG" id="COG2094">
    <property type="taxonomic scope" value="Bacteria"/>
</dbReference>
<dbReference type="HOGENOM" id="CLU_060471_4_1_5"/>
<dbReference type="Proteomes" id="UP000000796">
    <property type="component" value="Chromosome"/>
</dbReference>
<dbReference type="GO" id="GO:0003905">
    <property type="term" value="F:alkylbase DNA N-glycosylase activity"/>
    <property type="evidence" value="ECO:0007669"/>
    <property type="project" value="InterPro"/>
</dbReference>
<dbReference type="GO" id="GO:0003677">
    <property type="term" value="F:DNA binding"/>
    <property type="evidence" value="ECO:0007669"/>
    <property type="project" value="InterPro"/>
</dbReference>
<dbReference type="GO" id="GO:0006284">
    <property type="term" value="P:base-excision repair"/>
    <property type="evidence" value="ECO:0007669"/>
    <property type="project" value="InterPro"/>
</dbReference>
<dbReference type="CDD" id="cd00540">
    <property type="entry name" value="AAG"/>
    <property type="match status" value="1"/>
</dbReference>
<dbReference type="Gene3D" id="3.10.300.10">
    <property type="entry name" value="Methylpurine-DNA glycosylase (MPG)"/>
    <property type="match status" value="2"/>
</dbReference>
<dbReference type="HAMAP" id="MF_00527">
    <property type="entry name" value="3MGH"/>
    <property type="match status" value="1"/>
</dbReference>
<dbReference type="InterPro" id="IPR011034">
    <property type="entry name" value="Formyl_transferase-like_C_sf"/>
</dbReference>
<dbReference type="InterPro" id="IPR003180">
    <property type="entry name" value="MPG"/>
</dbReference>
<dbReference type="InterPro" id="IPR036995">
    <property type="entry name" value="MPG_sf"/>
</dbReference>
<dbReference type="NCBIfam" id="TIGR00567">
    <property type="entry name" value="3mg"/>
    <property type="match status" value="1"/>
</dbReference>
<dbReference type="NCBIfam" id="NF002004">
    <property type="entry name" value="PRK00802.1-4"/>
    <property type="match status" value="1"/>
</dbReference>
<dbReference type="PANTHER" id="PTHR10429">
    <property type="entry name" value="DNA-3-METHYLADENINE GLYCOSYLASE"/>
    <property type="match status" value="1"/>
</dbReference>
<dbReference type="PANTHER" id="PTHR10429:SF0">
    <property type="entry name" value="DNA-3-METHYLADENINE GLYCOSYLASE"/>
    <property type="match status" value="1"/>
</dbReference>
<dbReference type="Pfam" id="PF02245">
    <property type="entry name" value="Pur_DNA_glyco"/>
    <property type="match status" value="1"/>
</dbReference>
<dbReference type="SUPFAM" id="SSF50486">
    <property type="entry name" value="FMT C-terminal domain-like"/>
    <property type="match status" value="1"/>
</dbReference>
<gene>
    <name type="ordered locus">RrIowa_0572</name>
</gene>